<sequence>MTKTETINLRGPLKGEFEVPGDKSMTHRAIMLSSLAQGQSVITKPLLAEDCLRTMKIFELLGVNFDIKDDKVFVDSPGYQNFKTPHQSLYTGNSGTTTRIMAGLLSGIGIQSVLSGDESIGKRPMNRVIDPLKEMGASITGIENNYTPLVINPSDIQGIDYKMPVASAQVKSAILFASLFSKTASTITEIGITRNHTETMFEHYNIPLKINGNVIQTIPDAITSIKVKDFTVPGDISSAAFFIVAALITPGSDITIHNVGMNSTRSGIIDIVKEMKGNIEIINQTNTSEPTASIRIQYTPDLQPAELSGELITRAIDEIPIVALLCTQANGSSVIKDAEELKFKETNRIETTSDELGLLGFEVHPTDDGFIIHPSKFEHAASVSSYTDHRIGMTLAIASLLSDETLAIRNFDSVNTSFPEFLPLLKSISQKG</sequence>
<dbReference type="EC" id="2.5.1.19" evidence="1"/>
<dbReference type="EMBL" id="AM295250">
    <property type="protein sequence ID" value="CAL28006.1"/>
    <property type="molecule type" value="Genomic_DNA"/>
</dbReference>
<dbReference type="RefSeq" id="WP_015900347.1">
    <property type="nucleotide sequence ID" value="NC_012121.1"/>
</dbReference>
<dbReference type="SMR" id="B9DNV0"/>
<dbReference type="GeneID" id="93793524"/>
<dbReference type="KEGG" id="sca:SCA_1098"/>
<dbReference type="eggNOG" id="COG0128">
    <property type="taxonomic scope" value="Bacteria"/>
</dbReference>
<dbReference type="HOGENOM" id="CLU_024321_0_1_9"/>
<dbReference type="OrthoDB" id="9809920at2"/>
<dbReference type="BioCyc" id="SCAR396513:SCA_RS05500-MONOMER"/>
<dbReference type="UniPathway" id="UPA00053">
    <property type="reaction ID" value="UER00089"/>
</dbReference>
<dbReference type="Proteomes" id="UP000000444">
    <property type="component" value="Chromosome"/>
</dbReference>
<dbReference type="GO" id="GO:0005737">
    <property type="term" value="C:cytoplasm"/>
    <property type="evidence" value="ECO:0007669"/>
    <property type="project" value="UniProtKB-SubCell"/>
</dbReference>
<dbReference type="GO" id="GO:0003866">
    <property type="term" value="F:3-phosphoshikimate 1-carboxyvinyltransferase activity"/>
    <property type="evidence" value="ECO:0007669"/>
    <property type="project" value="UniProtKB-UniRule"/>
</dbReference>
<dbReference type="GO" id="GO:0008652">
    <property type="term" value="P:amino acid biosynthetic process"/>
    <property type="evidence" value="ECO:0007669"/>
    <property type="project" value="UniProtKB-KW"/>
</dbReference>
<dbReference type="GO" id="GO:0009073">
    <property type="term" value="P:aromatic amino acid family biosynthetic process"/>
    <property type="evidence" value="ECO:0007669"/>
    <property type="project" value="UniProtKB-KW"/>
</dbReference>
<dbReference type="GO" id="GO:0009423">
    <property type="term" value="P:chorismate biosynthetic process"/>
    <property type="evidence" value="ECO:0007669"/>
    <property type="project" value="UniProtKB-UniRule"/>
</dbReference>
<dbReference type="CDD" id="cd01556">
    <property type="entry name" value="EPSP_synthase"/>
    <property type="match status" value="1"/>
</dbReference>
<dbReference type="FunFam" id="3.65.10.10:FF:000005">
    <property type="entry name" value="3-phosphoshikimate 1-carboxyvinyltransferase"/>
    <property type="match status" value="1"/>
</dbReference>
<dbReference type="FunFam" id="3.65.10.10:FF:000006">
    <property type="entry name" value="3-phosphoshikimate 1-carboxyvinyltransferase"/>
    <property type="match status" value="1"/>
</dbReference>
<dbReference type="Gene3D" id="3.65.10.10">
    <property type="entry name" value="Enolpyruvate transferase domain"/>
    <property type="match status" value="2"/>
</dbReference>
<dbReference type="HAMAP" id="MF_00210">
    <property type="entry name" value="EPSP_synth"/>
    <property type="match status" value="1"/>
</dbReference>
<dbReference type="InterPro" id="IPR001986">
    <property type="entry name" value="Enolpyruvate_Tfrase_dom"/>
</dbReference>
<dbReference type="InterPro" id="IPR036968">
    <property type="entry name" value="Enolpyruvate_Tfrase_sf"/>
</dbReference>
<dbReference type="InterPro" id="IPR006264">
    <property type="entry name" value="EPSP_synthase"/>
</dbReference>
<dbReference type="InterPro" id="IPR023193">
    <property type="entry name" value="EPSP_synthase_CS"/>
</dbReference>
<dbReference type="InterPro" id="IPR013792">
    <property type="entry name" value="RNA3'P_cycl/enolpyr_Trfase_a/b"/>
</dbReference>
<dbReference type="NCBIfam" id="TIGR01356">
    <property type="entry name" value="aroA"/>
    <property type="match status" value="1"/>
</dbReference>
<dbReference type="PANTHER" id="PTHR21090">
    <property type="entry name" value="AROM/DEHYDROQUINATE SYNTHASE"/>
    <property type="match status" value="1"/>
</dbReference>
<dbReference type="PANTHER" id="PTHR21090:SF5">
    <property type="entry name" value="PENTAFUNCTIONAL AROM POLYPEPTIDE"/>
    <property type="match status" value="1"/>
</dbReference>
<dbReference type="Pfam" id="PF00275">
    <property type="entry name" value="EPSP_synthase"/>
    <property type="match status" value="1"/>
</dbReference>
<dbReference type="PIRSF" id="PIRSF000505">
    <property type="entry name" value="EPSPS"/>
    <property type="match status" value="1"/>
</dbReference>
<dbReference type="SUPFAM" id="SSF55205">
    <property type="entry name" value="EPT/RTPC-like"/>
    <property type="match status" value="1"/>
</dbReference>
<dbReference type="PROSITE" id="PS00104">
    <property type="entry name" value="EPSP_SYNTHASE_1"/>
    <property type="match status" value="1"/>
</dbReference>
<dbReference type="PROSITE" id="PS00885">
    <property type="entry name" value="EPSP_SYNTHASE_2"/>
    <property type="match status" value="1"/>
</dbReference>
<reference key="1">
    <citation type="journal article" date="2009" name="Appl. Environ. Microbiol.">
        <title>Genome analysis of the meat starter culture bacterium Staphylococcus carnosus TM300.</title>
        <authorList>
            <person name="Rosenstein R."/>
            <person name="Nerz C."/>
            <person name="Biswas L."/>
            <person name="Resch A."/>
            <person name="Raddatz G."/>
            <person name="Schuster S.C."/>
            <person name="Goetz F."/>
        </authorList>
    </citation>
    <scope>NUCLEOTIDE SEQUENCE [LARGE SCALE GENOMIC DNA]</scope>
    <source>
        <strain>TM300</strain>
    </source>
</reference>
<keyword id="KW-0028">Amino-acid biosynthesis</keyword>
<keyword id="KW-0057">Aromatic amino acid biosynthesis</keyword>
<keyword id="KW-0963">Cytoplasm</keyword>
<keyword id="KW-1185">Reference proteome</keyword>
<keyword id="KW-0808">Transferase</keyword>
<evidence type="ECO:0000255" key="1">
    <source>
        <dbReference type="HAMAP-Rule" id="MF_00210"/>
    </source>
</evidence>
<proteinExistence type="inferred from homology"/>
<organism>
    <name type="scientific">Staphylococcus carnosus (strain TM300)</name>
    <dbReference type="NCBI Taxonomy" id="396513"/>
    <lineage>
        <taxon>Bacteria</taxon>
        <taxon>Bacillati</taxon>
        <taxon>Bacillota</taxon>
        <taxon>Bacilli</taxon>
        <taxon>Bacillales</taxon>
        <taxon>Staphylococcaceae</taxon>
        <taxon>Staphylococcus</taxon>
    </lineage>
</organism>
<feature type="chain" id="PRO_1000124706" description="3-phosphoshikimate 1-carboxyvinyltransferase">
    <location>
        <begin position="1"/>
        <end position="432"/>
    </location>
</feature>
<feature type="active site" description="Proton acceptor" evidence="1">
    <location>
        <position position="317"/>
    </location>
</feature>
<feature type="binding site" evidence="1">
    <location>
        <position position="23"/>
    </location>
    <ligand>
        <name>3-phosphoshikimate</name>
        <dbReference type="ChEBI" id="CHEBI:145989"/>
    </ligand>
</feature>
<feature type="binding site" evidence="1">
    <location>
        <position position="23"/>
    </location>
    <ligand>
        <name>phosphoenolpyruvate</name>
        <dbReference type="ChEBI" id="CHEBI:58702"/>
    </ligand>
</feature>
<feature type="binding site" evidence="1">
    <location>
        <position position="24"/>
    </location>
    <ligand>
        <name>3-phosphoshikimate</name>
        <dbReference type="ChEBI" id="CHEBI:145989"/>
    </ligand>
</feature>
<feature type="binding site" evidence="1">
    <location>
        <position position="28"/>
    </location>
    <ligand>
        <name>3-phosphoshikimate</name>
        <dbReference type="ChEBI" id="CHEBI:145989"/>
    </ligand>
</feature>
<feature type="binding site" evidence="1">
    <location>
        <position position="95"/>
    </location>
    <ligand>
        <name>phosphoenolpyruvate</name>
        <dbReference type="ChEBI" id="CHEBI:58702"/>
    </ligand>
</feature>
<feature type="binding site" evidence="1">
    <location>
        <position position="123"/>
    </location>
    <ligand>
        <name>phosphoenolpyruvate</name>
        <dbReference type="ChEBI" id="CHEBI:58702"/>
    </ligand>
</feature>
<feature type="binding site" evidence="1">
    <location>
        <position position="167"/>
    </location>
    <ligand>
        <name>3-phosphoshikimate</name>
        <dbReference type="ChEBI" id="CHEBI:145989"/>
    </ligand>
</feature>
<feature type="binding site" evidence="1">
    <location>
        <position position="169"/>
    </location>
    <ligand>
        <name>3-phosphoshikimate</name>
        <dbReference type="ChEBI" id="CHEBI:145989"/>
    </ligand>
</feature>
<feature type="binding site" evidence="1">
    <location>
        <position position="169"/>
    </location>
    <ligand>
        <name>phosphoenolpyruvate</name>
        <dbReference type="ChEBI" id="CHEBI:58702"/>
    </ligand>
</feature>
<feature type="binding site" evidence="1">
    <location>
        <position position="317"/>
    </location>
    <ligand>
        <name>3-phosphoshikimate</name>
        <dbReference type="ChEBI" id="CHEBI:145989"/>
    </ligand>
</feature>
<feature type="binding site" evidence="1">
    <location>
        <position position="344"/>
    </location>
    <ligand>
        <name>3-phosphoshikimate</name>
        <dbReference type="ChEBI" id="CHEBI:145989"/>
    </ligand>
</feature>
<feature type="binding site" evidence="1">
    <location>
        <position position="348"/>
    </location>
    <ligand>
        <name>phosphoenolpyruvate</name>
        <dbReference type="ChEBI" id="CHEBI:58702"/>
    </ligand>
</feature>
<feature type="binding site" evidence="1">
    <location>
        <position position="390"/>
    </location>
    <ligand>
        <name>phosphoenolpyruvate</name>
        <dbReference type="ChEBI" id="CHEBI:58702"/>
    </ligand>
</feature>
<name>AROA_STACT</name>
<accession>B9DNV0</accession>
<protein>
    <recommendedName>
        <fullName evidence="1">3-phosphoshikimate 1-carboxyvinyltransferase</fullName>
        <ecNumber evidence="1">2.5.1.19</ecNumber>
    </recommendedName>
    <alternativeName>
        <fullName evidence="1">5-enolpyruvylshikimate-3-phosphate synthase</fullName>
        <shortName evidence="1">EPSP synthase</shortName>
        <shortName evidence="1">EPSPS</shortName>
    </alternativeName>
</protein>
<gene>
    <name evidence="1" type="primary">aroA</name>
    <name type="ordered locus">Sca_1098</name>
</gene>
<comment type="function">
    <text evidence="1">Catalyzes the transfer of the enolpyruvyl moiety of phosphoenolpyruvate (PEP) to the 5-hydroxyl of shikimate-3-phosphate (S3P) to produce enolpyruvyl shikimate-3-phosphate and inorganic phosphate.</text>
</comment>
<comment type="catalytic activity">
    <reaction evidence="1">
        <text>3-phosphoshikimate + phosphoenolpyruvate = 5-O-(1-carboxyvinyl)-3-phosphoshikimate + phosphate</text>
        <dbReference type="Rhea" id="RHEA:21256"/>
        <dbReference type="ChEBI" id="CHEBI:43474"/>
        <dbReference type="ChEBI" id="CHEBI:57701"/>
        <dbReference type="ChEBI" id="CHEBI:58702"/>
        <dbReference type="ChEBI" id="CHEBI:145989"/>
        <dbReference type="EC" id="2.5.1.19"/>
    </reaction>
    <physiologicalReaction direction="left-to-right" evidence="1">
        <dbReference type="Rhea" id="RHEA:21257"/>
    </physiologicalReaction>
</comment>
<comment type="pathway">
    <text evidence="1">Metabolic intermediate biosynthesis; chorismate biosynthesis; chorismate from D-erythrose 4-phosphate and phosphoenolpyruvate: step 6/7.</text>
</comment>
<comment type="subunit">
    <text evidence="1">Monomer.</text>
</comment>
<comment type="subcellular location">
    <subcellularLocation>
        <location evidence="1">Cytoplasm</location>
    </subcellularLocation>
</comment>
<comment type="similarity">
    <text evidence="1">Belongs to the EPSP synthase family.</text>
</comment>